<dbReference type="EMBL" id="U18113">
    <property type="protein sequence ID" value="AAA79980.1"/>
    <property type="molecule type" value="Genomic_DNA"/>
</dbReference>
<dbReference type="EMBL" id="U00061">
    <property type="protein sequence ID" value="AAB68379.1"/>
    <property type="molecule type" value="Genomic_DNA"/>
</dbReference>
<dbReference type="EMBL" id="BK006934">
    <property type="protein sequence ID" value="DAA06759.1"/>
    <property type="molecule type" value="Genomic_DNA"/>
</dbReference>
<dbReference type="PIR" id="S46700">
    <property type="entry name" value="S46700"/>
</dbReference>
<dbReference type="RefSeq" id="NP_011933.1">
    <property type="nucleotide sequence ID" value="NM_001179196.1"/>
</dbReference>
<dbReference type="PDB" id="6C0F">
    <property type="method" value="EM"/>
    <property type="resolution" value="3.70 A"/>
    <property type="chains" value="v=1-453"/>
</dbReference>
<dbReference type="PDB" id="8V83">
    <property type="method" value="EM"/>
    <property type="resolution" value="2.53 A"/>
    <property type="chains" value="Z=1-453"/>
</dbReference>
<dbReference type="PDB" id="8V84">
    <property type="method" value="EM"/>
    <property type="resolution" value="2.70 A"/>
    <property type="chains" value="Z=1-453"/>
</dbReference>
<dbReference type="PDBsum" id="6C0F"/>
<dbReference type="PDBsum" id="8V83"/>
<dbReference type="PDBsum" id="8V84"/>
<dbReference type="EMDB" id="EMD-43017"/>
<dbReference type="EMDB" id="EMD-43021"/>
<dbReference type="EMDB" id="EMD-7324"/>
<dbReference type="SMR" id="P38789"/>
<dbReference type="BioGRID" id="36498">
    <property type="interactions" value="380"/>
</dbReference>
<dbReference type="DIP" id="DIP-6501N"/>
<dbReference type="FunCoup" id="P38789">
    <property type="interactions" value="965"/>
</dbReference>
<dbReference type="IntAct" id="P38789">
    <property type="interactions" value="74"/>
</dbReference>
<dbReference type="MINT" id="P38789"/>
<dbReference type="STRING" id="4932.YHR066W"/>
<dbReference type="GlyGen" id="P38789">
    <property type="glycosylation" value="1 site"/>
</dbReference>
<dbReference type="iPTMnet" id="P38789"/>
<dbReference type="PaxDb" id="4932-YHR066W"/>
<dbReference type="PeptideAtlas" id="P38789"/>
<dbReference type="EnsemblFungi" id="YHR066W_mRNA">
    <property type="protein sequence ID" value="YHR066W"/>
    <property type="gene ID" value="YHR066W"/>
</dbReference>
<dbReference type="GeneID" id="856463"/>
<dbReference type="KEGG" id="sce:YHR066W"/>
<dbReference type="AGR" id="SGD:S000001108"/>
<dbReference type="SGD" id="S000001108">
    <property type="gene designation" value="SSF1"/>
</dbReference>
<dbReference type="VEuPathDB" id="FungiDB:YHR066W"/>
<dbReference type="eggNOG" id="KOG2963">
    <property type="taxonomic scope" value="Eukaryota"/>
</dbReference>
<dbReference type="GeneTree" id="ENSGT00530000064158"/>
<dbReference type="HOGENOM" id="CLU_026936_2_0_1"/>
<dbReference type="InParanoid" id="P38789"/>
<dbReference type="OMA" id="KDYTVMT"/>
<dbReference type="OrthoDB" id="10261452at2759"/>
<dbReference type="BioCyc" id="YEAST:G3O-31117-MONOMER"/>
<dbReference type="BioGRID-ORCS" id="856463">
    <property type="hits" value="0 hits in 10 CRISPR screens"/>
</dbReference>
<dbReference type="CD-CODE" id="BDAE0F88">
    <property type="entry name" value="Nucleolus"/>
</dbReference>
<dbReference type="PRO" id="PR:P38789"/>
<dbReference type="Proteomes" id="UP000002311">
    <property type="component" value="Chromosome VIII"/>
</dbReference>
<dbReference type="RNAct" id="P38789">
    <property type="molecule type" value="protein"/>
</dbReference>
<dbReference type="GO" id="GO:0005730">
    <property type="term" value="C:nucleolus"/>
    <property type="evidence" value="ECO:0000314"/>
    <property type="project" value="SGD"/>
</dbReference>
<dbReference type="GO" id="GO:0030687">
    <property type="term" value="C:preribosome, large subunit precursor"/>
    <property type="evidence" value="ECO:0000314"/>
    <property type="project" value="SGD"/>
</dbReference>
<dbReference type="GO" id="GO:0019843">
    <property type="term" value="F:rRNA binding"/>
    <property type="evidence" value="ECO:0000314"/>
    <property type="project" value="SGD"/>
</dbReference>
<dbReference type="GO" id="GO:0000463">
    <property type="term" value="P:maturation of LSU-rRNA from tricistronic rRNA transcript (SSU-rRNA, 5.8S rRNA, LSU-rRNA)"/>
    <property type="evidence" value="ECO:0000315"/>
    <property type="project" value="SGD"/>
</dbReference>
<dbReference type="GO" id="GO:0008361">
    <property type="term" value="P:regulation of cell size"/>
    <property type="evidence" value="ECO:0007001"/>
    <property type="project" value="SGD"/>
</dbReference>
<dbReference type="GO" id="GO:0000027">
    <property type="term" value="P:ribosomal large subunit assembly"/>
    <property type="evidence" value="ECO:0000315"/>
    <property type="project" value="SGD"/>
</dbReference>
<dbReference type="InterPro" id="IPR007109">
    <property type="entry name" value="Brix"/>
</dbReference>
<dbReference type="InterPro" id="IPR045112">
    <property type="entry name" value="PPAN-like"/>
</dbReference>
<dbReference type="PANTHER" id="PTHR12661">
    <property type="entry name" value="PETER PAN-RELATED"/>
    <property type="match status" value="1"/>
</dbReference>
<dbReference type="PANTHER" id="PTHR12661:SF5">
    <property type="entry name" value="SUPPRESSOR OF SWI4 1 HOMOLOG"/>
    <property type="match status" value="1"/>
</dbReference>
<dbReference type="Pfam" id="PF04427">
    <property type="entry name" value="Brix"/>
    <property type="match status" value="1"/>
</dbReference>
<dbReference type="SMART" id="SM00879">
    <property type="entry name" value="Brix"/>
    <property type="match status" value="1"/>
</dbReference>
<dbReference type="PROSITE" id="PS50833">
    <property type="entry name" value="BRIX"/>
    <property type="match status" value="1"/>
</dbReference>
<sequence>MAKRRQKKRTHAQLTPEQEQGIPKSMVIRVGQTSLANHSLNQLVKDFRQIMQPHTAIKLKERKSNKLKDFVVMCGPLGVTHLFMFTQSEKTGNVSLKIARTPQGPTVTFQVLDYSLGRDIKKFLKRPKSLNNDDVLNPPLLVLNGFSTSKRSGEDDQDVNVEKVIVSMFQNIFPPLNPARTSLNSIKRVFMINKDRETGEISMRHYFIDIREVEISRNLKRLYKAKNNLSKTVPNLHRKEDISSLILDHDLGAYTSESEIEDDAIVRVVDNQDVKAKHSQSLKSQRTPVEKKDNKEREKETEEEDVEMEEPKPSENLQPTPRKKAIKLTELGPRLTLKLVKIEEGICSGKVLHHEFVQKSSEEIKALEKRHAAKMRLKEQRKKEQEENIAKKKAVKDAKKQRKLERRKARAAEGGEGQGKDDAMSDDESSSSDSEHYGSVPEDLDSDLFSEVE</sequence>
<keyword id="KW-0002">3D-structure</keyword>
<keyword id="KW-0539">Nucleus</keyword>
<keyword id="KW-0597">Phosphoprotein</keyword>
<keyword id="KW-1185">Reference proteome</keyword>
<keyword id="KW-0690">Ribosome biogenesis</keyword>
<comment type="function">
    <text evidence="3 4">Required for biogenesis of the 60S ribosomal subunit.</text>
</comment>
<comment type="subunit">
    <text>Part of a complex that includes BRX1, RPF1, RPF2 and SSF1 or SSF2.</text>
</comment>
<comment type="interaction">
    <interactant intactId="EBI-18160">
        <id>P38789</id>
    </interactant>
    <interactant intactId="EBI-6289">
        <id>P36049</id>
        <label>EBP2</label>
    </interactant>
    <organismsDiffer>false</organismsDiffer>
    <experiments>4</experiments>
</comment>
<comment type="interaction">
    <interactant intactId="EBI-18160">
        <id>P38789</id>
    </interactant>
    <interactant intactId="EBI-34602">
        <id>Q06511</id>
        <label>RRP15</label>
    </interactant>
    <organismsDiffer>false</organismsDiffer>
    <experiments>5</experiments>
</comment>
<comment type="subcellular location">
    <subcellularLocation>
        <location evidence="4">Nucleus</location>
        <location evidence="4">Nucleolus</location>
    </subcellularLocation>
</comment>
<comment type="miscellaneous">
    <text evidence="5">Present with 8150 molecules/cell in log phase SD medium.</text>
</comment>
<gene>
    <name type="primary">SSF1</name>
    <name type="ordered locus">YHR066W</name>
</gene>
<protein>
    <recommendedName>
        <fullName>Ribosome biogenesis protein SSF1</fullName>
    </recommendedName>
</protein>
<name>SSF1_YEAST</name>
<feature type="chain" id="PRO_0000120259" description="Ribosome biogenesis protein SSF1">
    <location>
        <begin position="1"/>
        <end position="453"/>
    </location>
</feature>
<feature type="domain" description="Brix" evidence="1">
    <location>
        <begin position="26"/>
        <end position="348"/>
    </location>
</feature>
<feature type="region of interest" description="Disordered" evidence="2">
    <location>
        <begin position="1"/>
        <end position="22"/>
    </location>
</feature>
<feature type="region of interest" description="Disordered" evidence="2">
    <location>
        <begin position="275"/>
        <end position="324"/>
    </location>
</feature>
<feature type="region of interest" description="Disordered" evidence="2">
    <location>
        <begin position="374"/>
        <end position="453"/>
    </location>
</feature>
<feature type="compositionally biased region" description="Basic residues" evidence="2">
    <location>
        <begin position="1"/>
        <end position="11"/>
    </location>
</feature>
<feature type="compositionally biased region" description="Basic and acidic residues" evidence="2">
    <location>
        <begin position="288"/>
        <end position="300"/>
    </location>
</feature>
<feature type="compositionally biased region" description="Basic and acidic residues" evidence="2">
    <location>
        <begin position="374"/>
        <end position="398"/>
    </location>
</feature>
<feature type="compositionally biased region" description="Basic residues" evidence="2">
    <location>
        <begin position="399"/>
        <end position="409"/>
    </location>
</feature>
<feature type="compositionally biased region" description="Basic and acidic residues" evidence="2">
    <location>
        <begin position="410"/>
        <end position="423"/>
    </location>
</feature>
<feature type="compositionally biased region" description="Acidic residues" evidence="2">
    <location>
        <begin position="442"/>
        <end position="453"/>
    </location>
</feature>
<feature type="modified residue" description="Phosphothreonine" evidence="6 7">
    <location>
        <position position="301"/>
    </location>
</feature>
<evidence type="ECO:0000255" key="1">
    <source>
        <dbReference type="PROSITE-ProRule" id="PRU00034"/>
    </source>
</evidence>
<evidence type="ECO:0000256" key="2">
    <source>
        <dbReference type="SAM" id="MobiDB-lite"/>
    </source>
</evidence>
<evidence type="ECO:0000269" key="3">
    <source>
    </source>
</evidence>
<evidence type="ECO:0000269" key="4">
    <source>
    </source>
</evidence>
<evidence type="ECO:0000269" key="5">
    <source>
    </source>
</evidence>
<evidence type="ECO:0007744" key="6">
    <source>
    </source>
</evidence>
<evidence type="ECO:0007744" key="7">
    <source>
    </source>
</evidence>
<accession>P38789</accession>
<accession>D3DL15</accession>
<proteinExistence type="evidence at protein level"/>
<organism>
    <name type="scientific">Saccharomyces cerevisiae (strain ATCC 204508 / S288c)</name>
    <name type="common">Baker's yeast</name>
    <dbReference type="NCBI Taxonomy" id="559292"/>
    <lineage>
        <taxon>Eukaryota</taxon>
        <taxon>Fungi</taxon>
        <taxon>Dikarya</taxon>
        <taxon>Ascomycota</taxon>
        <taxon>Saccharomycotina</taxon>
        <taxon>Saccharomycetes</taxon>
        <taxon>Saccharomycetales</taxon>
        <taxon>Saccharomycetaceae</taxon>
        <taxon>Saccharomyces</taxon>
    </lineage>
</organism>
<reference key="1">
    <citation type="journal article" date="1995" name="DNA Cell Biol.">
        <title>An essential gene pair in Saccharomyces cerevisiae with a potential role in mating.</title>
        <authorList>
            <person name="Yu Y."/>
            <person name="Hirsch J.P."/>
        </authorList>
    </citation>
    <scope>NUCLEOTIDE SEQUENCE [GENOMIC DNA]</scope>
</reference>
<reference key="2">
    <citation type="journal article" date="1994" name="Science">
        <title>Complete nucleotide sequence of Saccharomyces cerevisiae chromosome VIII.</title>
        <authorList>
            <person name="Johnston M."/>
            <person name="Andrews S."/>
            <person name="Brinkman R."/>
            <person name="Cooper J."/>
            <person name="Ding H."/>
            <person name="Dover J."/>
            <person name="Du Z."/>
            <person name="Favello A."/>
            <person name="Fulton L."/>
            <person name="Gattung S."/>
            <person name="Geisel C."/>
            <person name="Kirsten J."/>
            <person name="Kucaba T."/>
            <person name="Hillier L.W."/>
            <person name="Jier M."/>
            <person name="Johnston L."/>
            <person name="Langston Y."/>
            <person name="Latreille P."/>
            <person name="Louis E.J."/>
            <person name="Macri C."/>
            <person name="Mardis E."/>
            <person name="Menezes S."/>
            <person name="Mouser L."/>
            <person name="Nhan M."/>
            <person name="Rifkin L."/>
            <person name="Riles L."/>
            <person name="St Peter H."/>
            <person name="Trevaskis E."/>
            <person name="Vaughan K."/>
            <person name="Vignati D."/>
            <person name="Wilcox L."/>
            <person name="Wohldman P."/>
            <person name="Waterston R."/>
            <person name="Wilson R."/>
            <person name="Vaudin M."/>
        </authorList>
    </citation>
    <scope>NUCLEOTIDE SEQUENCE [LARGE SCALE GENOMIC DNA]</scope>
    <source>
        <strain>ATCC 204508 / S288c</strain>
    </source>
</reference>
<reference key="3">
    <citation type="journal article" date="2014" name="G3 (Bethesda)">
        <title>The reference genome sequence of Saccharomyces cerevisiae: Then and now.</title>
        <authorList>
            <person name="Engel S.R."/>
            <person name="Dietrich F.S."/>
            <person name="Fisk D.G."/>
            <person name="Binkley G."/>
            <person name="Balakrishnan R."/>
            <person name="Costanzo M.C."/>
            <person name="Dwight S.S."/>
            <person name="Hitz B.C."/>
            <person name="Karra K."/>
            <person name="Nash R.S."/>
            <person name="Weng S."/>
            <person name="Wong E.D."/>
            <person name="Lloyd P."/>
            <person name="Skrzypek M.S."/>
            <person name="Miyasato S.R."/>
            <person name="Simison M."/>
            <person name="Cherry J.M."/>
        </authorList>
    </citation>
    <scope>GENOME REANNOTATION</scope>
    <source>
        <strain>ATCC 204508 / S288c</strain>
    </source>
</reference>
<reference key="4">
    <citation type="journal article" date="2002" name="Mol. Cell">
        <title>Ssf1p prevents premature processing of an early pre-60S ribosomal particle.</title>
        <authorList>
            <person name="Fatica A."/>
            <person name="Cronshaw A.D."/>
            <person name="Dlakic M."/>
            <person name="Tollervey D."/>
        </authorList>
    </citation>
    <scope>FUNCTION</scope>
</reference>
<reference key="5">
    <citation type="journal article" date="2003" name="FEMS Yeast Res.">
        <title>Functional analysis in yeast of the Brix protein superfamily involved in the biogenesis of ribosomes.</title>
        <authorList>
            <person name="Bogengruber E."/>
            <person name="Briza P."/>
            <person name="Doppler E."/>
            <person name="Wimmer H."/>
            <person name="Koller L."/>
            <person name="Fasiolo F."/>
            <person name="Senger B."/>
            <person name="Hegemann J.H."/>
            <person name="Breitenbach M."/>
        </authorList>
    </citation>
    <scope>FUNCTION</scope>
    <scope>SUBCELLULAR LOCATION</scope>
</reference>
<reference key="6">
    <citation type="journal article" date="2003" name="Nature">
        <title>Global analysis of protein expression in yeast.</title>
        <authorList>
            <person name="Ghaemmaghami S."/>
            <person name="Huh W.-K."/>
            <person name="Bower K."/>
            <person name="Howson R.W."/>
            <person name="Belle A."/>
            <person name="Dephoure N."/>
            <person name="O'Shea E.K."/>
            <person name="Weissman J.S."/>
        </authorList>
    </citation>
    <scope>LEVEL OF PROTEIN EXPRESSION [LARGE SCALE ANALYSIS]</scope>
</reference>
<reference key="7">
    <citation type="journal article" date="2007" name="J. Proteome Res.">
        <title>Large-scale phosphorylation analysis of alpha-factor-arrested Saccharomyces cerevisiae.</title>
        <authorList>
            <person name="Li X."/>
            <person name="Gerber S.A."/>
            <person name="Rudner A.D."/>
            <person name="Beausoleil S.A."/>
            <person name="Haas W."/>
            <person name="Villen J."/>
            <person name="Elias J.E."/>
            <person name="Gygi S.P."/>
        </authorList>
    </citation>
    <scope>PHOSPHORYLATION [LARGE SCALE ANALYSIS] AT THR-301</scope>
    <scope>IDENTIFICATION BY MASS SPECTROMETRY [LARGE SCALE ANALYSIS]</scope>
    <source>
        <strain>ADR376</strain>
    </source>
</reference>
<reference key="8">
    <citation type="journal article" date="2009" name="Science">
        <title>Global analysis of Cdk1 substrate phosphorylation sites provides insights into evolution.</title>
        <authorList>
            <person name="Holt L.J."/>
            <person name="Tuch B.B."/>
            <person name="Villen J."/>
            <person name="Johnson A.D."/>
            <person name="Gygi S.P."/>
            <person name="Morgan D.O."/>
        </authorList>
    </citation>
    <scope>PHOSPHORYLATION [LARGE SCALE ANALYSIS] AT THR-301</scope>
    <scope>IDENTIFICATION BY MASS SPECTROMETRY [LARGE SCALE ANALYSIS]</scope>
</reference>